<accession>C1KWT1</accession>
<name>LEU1_LISMC</name>
<sequence length="512" mass="56064">MKKIQFFDTTLRDGEQTPGVNFDVKEKIQIALQLEKLGIDVIEAGFPISSPGDFECVKAIAKAIKHCSVTGLARCVEGDIDRAEEALKDAVSPQIHIFLATSDVHMEYKLKMSRAEVLASIKHHISYARQKFDVVQFSPEDATRSDRAFLIEAVQTAIDAGATVINIPDTVGYTNPTEFGQLFQDLRREIKQFDDIIFASHCHDDLGMATANALAAIENGARRVEGTINGIGERAGNTALEEVAVALHIRKDFYQAETNIVLNQFKNSSDLISRLSGMPVPRNKAVIGGNAYAHESGIHQDGVLKNPDTYEIITPALVGVDKNSLPLGKLSGKHAFNTRMEEMGYTLTEQEQKDAFKRFKQLADAKKEVTEEDLHALILGQSSESADDFELKHLQVQYVTGGVQGAIVRIEERDGALVEDAATGSGSIEAIYNTINRLMKQDIELTDYRIQAITAGQDAQAEVHVVIKNDKGAVFHGIGIDFDVLTASAKAYLQASGKSKTASKQADFEEVK</sequence>
<proteinExistence type="inferred from homology"/>
<evidence type="ECO:0000255" key="1">
    <source>
        <dbReference type="HAMAP-Rule" id="MF_01025"/>
    </source>
</evidence>
<reference key="1">
    <citation type="journal article" date="2012" name="BMC Genomics">
        <title>Comparative genomics and transcriptomics of lineages I, II, and III strains of Listeria monocytogenes.</title>
        <authorList>
            <person name="Hain T."/>
            <person name="Ghai R."/>
            <person name="Billion A."/>
            <person name="Kuenne C.T."/>
            <person name="Steinweg C."/>
            <person name="Izar B."/>
            <person name="Mohamed W."/>
            <person name="Mraheil M."/>
            <person name="Domann E."/>
            <person name="Schaffrath S."/>
            <person name="Karst U."/>
            <person name="Goesmann A."/>
            <person name="Oehm S."/>
            <person name="Puhler A."/>
            <person name="Merkl R."/>
            <person name="Vorwerk S."/>
            <person name="Glaser P."/>
            <person name="Garrido P."/>
            <person name="Rusniok C."/>
            <person name="Buchrieser C."/>
            <person name="Goebel W."/>
            <person name="Chakraborty T."/>
        </authorList>
    </citation>
    <scope>NUCLEOTIDE SEQUENCE [LARGE SCALE GENOMIC DNA]</scope>
    <source>
        <strain>CLIP80459</strain>
    </source>
</reference>
<protein>
    <recommendedName>
        <fullName evidence="1">2-isopropylmalate synthase</fullName>
        <ecNumber evidence="1">2.3.3.13</ecNumber>
    </recommendedName>
    <alternativeName>
        <fullName evidence="1">Alpha-IPM synthase</fullName>
    </alternativeName>
    <alternativeName>
        <fullName evidence="1">Alpha-isopropylmalate synthase</fullName>
    </alternativeName>
</protein>
<feature type="chain" id="PRO_1000213315" description="2-isopropylmalate synthase">
    <location>
        <begin position="1"/>
        <end position="512"/>
    </location>
</feature>
<feature type="domain" description="Pyruvate carboxyltransferase" evidence="1">
    <location>
        <begin position="4"/>
        <end position="266"/>
    </location>
</feature>
<feature type="region of interest" description="Regulatory domain" evidence="1">
    <location>
        <begin position="390"/>
        <end position="512"/>
    </location>
</feature>
<feature type="binding site" evidence="1">
    <location>
        <position position="13"/>
    </location>
    <ligand>
        <name>Mn(2+)</name>
        <dbReference type="ChEBI" id="CHEBI:29035"/>
    </ligand>
</feature>
<feature type="binding site" evidence="1">
    <location>
        <position position="201"/>
    </location>
    <ligand>
        <name>Mn(2+)</name>
        <dbReference type="ChEBI" id="CHEBI:29035"/>
    </ligand>
</feature>
<feature type="binding site" evidence="1">
    <location>
        <position position="203"/>
    </location>
    <ligand>
        <name>Mn(2+)</name>
        <dbReference type="ChEBI" id="CHEBI:29035"/>
    </ligand>
</feature>
<feature type="binding site" evidence="1">
    <location>
        <position position="237"/>
    </location>
    <ligand>
        <name>Mn(2+)</name>
        <dbReference type="ChEBI" id="CHEBI:29035"/>
    </ligand>
</feature>
<comment type="function">
    <text evidence="1">Catalyzes the condensation of the acetyl group of acetyl-CoA with 3-methyl-2-oxobutanoate (2-ketoisovalerate) to form 3-carboxy-3-hydroxy-4-methylpentanoate (2-isopropylmalate).</text>
</comment>
<comment type="catalytic activity">
    <reaction evidence="1">
        <text>3-methyl-2-oxobutanoate + acetyl-CoA + H2O = (2S)-2-isopropylmalate + CoA + H(+)</text>
        <dbReference type="Rhea" id="RHEA:21524"/>
        <dbReference type="ChEBI" id="CHEBI:1178"/>
        <dbReference type="ChEBI" id="CHEBI:11851"/>
        <dbReference type="ChEBI" id="CHEBI:15377"/>
        <dbReference type="ChEBI" id="CHEBI:15378"/>
        <dbReference type="ChEBI" id="CHEBI:57287"/>
        <dbReference type="ChEBI" id="CHEBI:57288"/>
        <dbReference type="EC" id="2.3.3.13"/>
    </reaction>
</comment>
<comment type="cofactor">
    <cofactor evidence="1">
        <name>Mn(2+)</name>
        <dbReference type="ChEBI" id="CHEBI:29035"/>
    </cofactor>
</comment>
<comment type="pathway">
    <text evidence="1">Amino-acid biosynthesis; L-leucine biosynthesis; L-leucine from 3-methyl-2-oxobutanoate: step 1/4.</text>
</comment>
<comment type="subunit">
    <text evidence="1">Homodimer.</text>
</comment>
<comment type="subcellular location">
    <subcellularLocation>
        <location evidence="1">Cytoplasm</location>
    </subcellularLocation>
</comment>
<comment type="similarity">
    <text evidence="1">Belongs to the alpha-IPM synthase/homocitrate synthase family. LeuA type 1 subfamily.</text>
</comment>
<gene>
    <name evidence="1" type="primary">leuA</name>
    <name type="ordered locus">Lm4b_01999</name>
</gene>
<organism>
    <name type="scientific">Listeria monocytogenes serotype 4b (strain CLIP80459)</name>
    <dbReference type="NCBI Taxonomy" id="568819"/>
    <lineage>
        <taxon>Bacteria</taxon>
        <taxon>Bacillati</taxon>
        <taxon>Bacillota</taxon>
        <taxon>Bacilli</taxon>
        <taxon>Bacillales</taxon>
        <taxon>Listeriaceae</taxon>
        <taxon>Listeria</taxon>
    </lineage>
</organism>
<keyword id="KW-0028">Amino-acid biosynthesis</keyword>
<keyword id="KW-0100">Branched-chain amino acid biosynthesis</keyword>
<keyword id="KW-0963">Cytoplasm</keyword>
<keyword id="KW-0432">Leucine biosynthesis</keyword>
<keyword id="KW-0464">Manganese</keyword>
<keyword id="KW-0479">Metal-binding</keyword>
<keyword id="KW-0808">Transferase</keyword>
<dbReference type="EC" id="2.3.3.13" evidence="1"/>
<dbReference type="EMBL" id="FM242711">
    <property type="protein sequence ID" value="CAS05756.1"/>
    <property type="molecule type" value="Genomic_DNA"/>
</dbReference>
<dbReference type="RefSeq" id="WP_003725876.1">
    <property type="nucleotide sequence ID" value="NC_012488.1"/>
</dbReference>
<dbReference type="SMR" id="C1KWT1"/>
<dbReference type="KEGG" id="lmc:Lm4b_01999"/>
<dbReference type="HOGENOM" id="CLU_022158_0_1_9"/>
<dbReference type="UniPathway" id="UPA00048">
    <property type="reaction ID" value="UER00070"/>
</dbReference>
<dbReference type="GO" id="GO:0005737">
    <property type="term" value="C:cytoplasm"/>
    <property type="evidence" value="ECO:0007669"/>
    <property type="project" value="UniProtKB-SubCell"/>
</dbReference>
<dbReference type="GO" id="GO:0003852">
    <property type="term" value="F:2-isopropylmalate synthase activity"/>
    <property type="evidence" value="ECO:0007669"/>
    <property type="project" value="UniProtKB-UniRule"/>
</dbReference>
<dbReference type="GO" id="GO:0003985">
    <property type="term" value="F:acetyl-CoA C-acetyltransferase activity"/>
    <property type="evidence" value="ECO:0007669"/>
    <property type="project" value="UniProtKB-UniRule"/>
</dbReference>
<dbReference type="GO" id="GO:0030145">
    <property type="term" value="F:manganese ion binding"/>
    <property type="evidence" value="ECO:0007669"/>
    <property type="project" value="UniProtKB-UniRule"/>
</dbReference>
<dbReference type="GO" id="GO:0009098">
    <property type="term" value="P:L-leucine biosynthetic process"/>
    <property type="evidence" value="ECO:0007669"/>
    <property type="project" value="UniProtKB-UniRule"/>
</dbReference>
<dbReference type="CDD" id="cd07940">
    <property type="entry name" value="DRE_TIM_IPMS"/>
    <property type="match status" value="1"/>
</dbReference>
<dbReference type="FunFam" id="1.10.238.260:FF:000001">
    <property type="entry name" value="2-isopropylmalate synthase"/>
    <property type="match status" value="1"/>
</dbReference>
<dbReference type="FunFam" id="3.20.20.70:FF:000010">
    <property type="entry name" value="2-isopropylmalate synthase"/>
    <property type="match status" value="1"/>
</dbReference>
<dbReference type="FunFam" id="3.30.160.270:FF:000003">
    <property type="entry name" value="2-isopropylmalate synthase"/>
    <property type="match status" value="1"/>
</dbReference>
<dbReference type="Gene3D" id="1.10.238.260">
    <property type="match status" value="1"/>
</dbReference>
<dbReference type="Gene3D" id="3.30.160.270">
    <property type="match status" value="1"/>
</dbReference>
<dbReference type="Gene3D" id="3.20.20.70">
    <property type="entry name" value="Aldolase class I"/>
    <property type="match status" value="1"/>
</dbReference>
<dbReference type="HAMAP" id="MF_01025">
    <property type="entry name" value="LeuA_type1"/>
    <property type="match status" value="1"/>
</dbReference>
<dbReference type="InterPro" id="IPR050073">
    <property type="entry name" value="2-IPM_HCS-like"/>
</dbReference>
<dbReference type="InterPro" id="IPR013709">
    <property type="entry name" value="2-isopropylmalate_synth_dimer"/>
</dbReference>
<dbReference type="InterPro" id="IPR002034">
    <property type="entry name" value="AIPM/Hcit_synth_CS"/>
</dbReference>
<dbReference type="InterPro" id="IPR013785">
    <property type="entry name" value="Aldolase_TIM"/>
</dbReference>
<dbReference type="InterPro" id="IPR054691">
    <property type="entry name" value="LeuA/HCS_post-cat"/>
</dbReference>
<dbReference type="InterPro" id="IPR036230">
    <property type="entry name" value="LeuA_allosteric_dom_sf"/>
</dbReference>
<dbReference type="InterPro" id="IPR005671">
    <property type="entry name" value="LeuA_bact_synth"/>
</dbReference>
<dbReference type="InterPro" id="IPR000891">
    <property type="entry name" value="PYR_CT"/>
</dbReference>
<dbReference type="NCBIfam" id="TIGR00973">
    <property type="entry name" value="leuA_bact"/>
    <property type="match status" value="1"/>
</dbReference>
<dbReference type="NCBIfam" id="NF002086">
    <property type="entry name" value="PRK00915.1-3"/>
    <property type="match status" value="1"/>
</dbReference>
<dbReference type="NCBIfam" id="NF002088">
    <property type="entry name" value="PRK00915.1-5"/>
    <property type="match status" value="1"/>
</dbReference>
<dbReference type="PANTHER" id="PTHR10277:SF9">
    <property type="entry name" value="2-ISOPROPYLMALATE SYNTHASE 1, CHLOROPLASTIC-RELATED"/>
    <property type="match status" value="1"/>
</dbReference>
<dbReference type="PANTHER" id="PTHR10277">
    <property type="entry name" value="HOMOCITRATE SYNTHASE-RELATED"/>
    <property type="match status" value="1"/>
</dbReference>
<dbReference type="Pfam" id="PF22617">
    <property type="entry name" value="HCS_D2"/>
    <property type="match status" value="1"/>
</dbReference>
<dbReference type="Pfam" id="PF00682">
    <property type="entry name" value="HMGL-like"/>
    <property type="match status" value="1"/>
</dbReference>
<dbReference type="Pfam" id="PF08502">
    <property type="entry name" value="LeuA_dimer"/>
    <property type="match status" value="1"/>
</dbReference>
<dbReference type="SMART" id="SM00917">
    <property type="entry name" value="LeuA_dimer"/>
    <property type="match status" value="1"/>
</dbReference>
<dbReference type="SUPFAM" id="SSF110921">
    <property type="entry name" value="2-isopropylmalate synthase LeuA, allosteric (dimerisation) domain"/>
    <property type="match status" value="1"/>
</dbReference>
<dbReference type="SUPFAM" id="SSF51569">
    <property type="entry name" value="Aldolase"/>
    <property type="match status" value="1"/>
</dbReference>
<dbReference type="PROSITE" id="PS00815">
    <property type="entry name" value="AIPM_HOMOCIT_SYNTH_1"/>
    <property type="match status" value="1"/>
</dbReference>
<dbReference type="PROSITE" id="PS00816">
    <property type="entry name" value="AIPM_HOMOCIT_SYNTH_2"/>
    <property type="match status" value="1"/>
</dbReference>
<dbReference type="PROSITE" id="PS50991">
    <property type="entry name" value="PYR_CT"/>
    <property type="match status" value="1"/>
</dbReference>